<proteinExistence type="evidence at protein level"/>
<organism>
    <name type="scientific">Mus musculus</name>
    <name type="common">Mouse</name>
    <dbReference type="NCBI Taxonomy" id="10090"/>
    <lineage>
        <taxon>Eukaryota</taxon>
        <taxon>Metazoa</taxon>
        <taxon>Chordata</taxon>
        <taxon>Craniata</taxon>
        <taxon>Vertebrata</taxon>
        <taxon>Euteleostomi</taxon>
        <taxon>Mammalia</taxon>
        <taxon>Eutheria</taxon>
        <taxon>Euarchontoglires</taxon>
        <taxon>Glires</taxon>
        <taxon>Rodentia</taxon>
        <taxon>Myomorpha</taxon>
        <taxon>Muroidea</taxon>
        <taxon>Muridae</taxon>
        <taxon>Murinae</taxon>
        <taxon>Mus</taxon>
        <taxon>Mus</taxon>
    </lineage>
</organism>
<keyword id="KW-0010">Activator</keyword>
<keyword id="KW-0970">Cilium biogenesis/degradation</keyword>
<keyword id="KW-0238">DNA-binding</keyword>
<keyword id="KW-0539">Nucleus</keyword>
<keyword id="KW-1185">Reference proteome</keyword>
<keyword id="KW-0804">Transcription</keyword>
<keyword id="KW-0805">Transcription regulation</keyword>
<feature type="chain" id="PRO_0000219470" description="Transcription factor E2F5">
    <location>
        <begin position="1"/>
        <end position="335"/>
    </location>
</feature>
<feature type="DNA-binding region" evidence="3">
    <location>
        <begin position="37"/>
        <end position="108"/>
    </location>
</feature>
<feature type="region of interest" description="Disordered" evidence="4">
    <location>
        <begin position="1"/>
        <end position="40"/>
    </location>
</feature>
<feature type="region of interest" description="Leucine-zipper">
    <location>
        <begin position="66"/>
        <end position="88"/>
    </location>
</feature>
<feature type="region of interest" description="Dimerization" evidence="3">
    <location>
        <begin position="109"/>
        <end position="205"/>
    </location>
</feature>
<feature type="region of interest" description="Disordered" evidence="4">
    <location>
        <begin position="226"/>
        <end position="285"/>
    </location>
</feature>
<feature type="region of interest" description="Transactivation" evidence="3">
    <location>
        <begin position="277"/>
        <end position="335"/>
    </location>
</feature>
<feature type="region of interest" description="RBL2 association" evidence="3">
    <location>
        <begin position="312"/>
        <end position="329"/>
    </location>
</feature>
<feature type="short sequence motif" description="DEF box">
    <location>
        <begin position="71"/>
        <end position="108"/>
    </location>
</feature>
<feature type="compositionally biased region" description="Low complexity" evidence="4">
    <location>
        <begin position="1"/>
        <end position="18"/>
    </location>
</feature>
<feature type="compositionally biased region" description="Low complexity" evidence="4">
    <location>
        <begin position="238"/>
        <end position="256"/>
    </location>
</feature>
<feature type="sequence conflict" description="In Ref. 1; CAA60508." evidence="7" ref="1">
    <original>AALA</original>
    <variation>RRSR</variation>
    <location>
        <begin position="32"/>
        <end position="35"/>
    </location>
</feature>
<evidence type="ECO:0000250" key="1"/>
<evidence type="ECO:0000250" key="2">
    <source>
        <dbReference type="UniProtKB" id="Q6DE14"/>
    </source>
</evidence>
<evidence type="ECO:0000255" key="3"/>
<evidence type="ECO:0000256" key="4">
    <source>
        <dbReference type="SAM" id="MobiDB-lite"/>
    </source>
</evidence>
<evidence type="ECO:0000269" key="5">
    <source>
    </source>
</evidence>
<evidence type="ECO:0000269" key="6">
    <source>
    </source>
</evidence>
<evidence type="ECO:0000305" key="7"/>
<sequence>MAAAEPTSSAQPTPQAQAQPPPHGAPSSQPSAALAGGSSRHEKSLGLLTTKFVSLLQEAQDGVLDLKAAADTLAVRQKRRIYDITNVLEGIDLIEKKSKNSIQWKGVGAGCNTKEVIDRLRCLKAEIEDLELKERELDQQKLWLQQSIKNVMEDSINNRFSYVTHEDICNCFHGDTLLAIQAPSGTQLEVPIPEMGQNGQKKYQINLKSHSGPIHVLLINKESSSSKPVVFPVPPPDDLTQPSSQSSTSVTPQKSTMAAQNLPEQHVSERSQTFQQTPAAEVSSGSISGDIIDELMSSDVFPLLRLSPTPADDYNFNLDDNEGVCDLFDVQILNY</sequence>
<reference key="1">
    <citation type="journal article" date="1995" name="Oncogene">
        <title>Molecular and functional characterisation of E2F-5, a new member of the E2F family.</title>
        <authorList>
            <person name="Buck V."/>
            <person name="Allen K.E."/>
            <person name="Soerensen T."/>
            <person name="Bybee A."/>
            <person name="Hijmans E.M."/>
            <person name="Voorhoeve P.M."/>
            <person name="Bernards R."/>
            <person name="la Thangue N.B."/>
        </authorList>
    </citation>
    <scope>NUCLEOTIDE SEQUENCE [MRNA]</scope>
</reference>
<reference key="2">
    <citation type="journal article" date="2005" name="Science">
        <title>The transcriptional landscape of the mammalian genome.</title>
        <authorList>
            <person name="Carninci P."/>
            <person name="Kasukawa T."/>
            <person name="Katayama S."/>
            <person name="Gough J."/>
            <person name="Frith M.C."/>
            <person name="Maeda N."/>
            <person name="Oyama R."/>
            <person name="Ravasi T."/>
            <person name="Lenhard B."/>
            <person name="Wells C."/>
            <person name="Kodzius R."/>
            <person name="Shimokawa K."/>
            <person name="Bajic V.B."/>
            <person name="Brenner S.E."/>
            <person name="Batalov S."/>
            <person name="Forrest A.R."/>
            <person name="Zavolan M."/>
            <person name="Davis M.J."/>
            <person name="Wilming L.G."/>
            <person name="Aidinis V."/>
            <person name="Allen J.E."/>
            <person name="Ambesi-Impiombato A."/>
            <person name="Apweiler R."/>
            <person name="Aturaliya R.N."/>
            <person name="Bailey T.L."/>
            <person name="Bansal M."/>
            <person name="Baxter L."/>
            <person name="Beisel K.W."/>
            <person name="Bersano T."/>
            <person name="Bono H."/>
            <person name="Chalk A.M."/>
            <person name="Chiu K.P."/>
            <person name="Choudhary V."/>
            <person name="Christoffels A."/>
            <person name="Clutterbuck D.R."/>
            <person name="Crowe M.L."/>
            <person name="Dalla E."/>
            <person name="Dalrymple B.P."/>
            <person name="de Bono B."/>
            <person name="Della Gatta G."/>
            <person name="di Bernardo D."/>
            <person name="Down T."/>
            <person name="Engstrom P."/>
            <person name="Fagiolini M."/>
            <person name="Faulkner G."/>
            <person name="Fletcher C.F."/>
            <person name="Fukushima T."/>
            <person name="Furuno M."/>
            <person name="Futaki S."/>
            <person name="Gariboldi M."/>
            <person name="Georgii-Hemming P."/>
            <person name="Gingeras T.R."/>
            <person name="Gojobori T."/>
            <person name="Green R.E."/>
            <person name="Gustincich S."/>
            <person name="Harbers M."/>
            <person name="Hayashi Y."/>
            <person name="Hensch T.K."/>
            <person name="Hirokawa N."/>
            <person name="Hill D."/>
            <person name="Huminiecki L."/>
            <person name="Iacono M."/>
            <person name="Ikeo K."/>
            <person name="Iwama A."/>
            <person name="Ishikawa T."/>
            <person name="Jakt M."/>
            <person name="Kanapin A."/>
            <person name="Katoh M."/>
            <person name="Kawasawa Y."/>
            <person name="Kelso J."/>
            <person name="Kitamura H."/>
            <person name="Kitano H."/>
            <person name="Kollias G."/>
            <person name="Krishnan S.P."/>
            <person name="Kruger A."/>
            <person name="Kummerfeld S.K."/>
            <person name="Kurochkin I.V."/>
            <person name="Lareau L.F."/>
            <person name="Lazarevic D."/>
            <person name="Lipovich L."/>
            <person name="Liu J."/>
            <person name="Liuni S."/>
            <person name="McWilliam S."/>
            <person name="Madan Babu M."/>
            <person name="Madera M."/>
            <person name="Marchionni L."/>
            <person name="Matsuda H."/>
            <person name="Matsuzawa S."/>
            <person name="Miki H."/>
            <person name="Mignone F."/>
            <person name="Miyake S."/>
            <person name="Morris K."/>
            <person name="Mottagui-Tabar S."/>
            <person name="Mulder N."/>
            <person name="Nakano N."/>
            <person name="Nakauchi H."/>
            <person name="Ng P."/>
            <person name="Nilsson R."/>
            <person name="Nishiguchi S."/>
            <person name="Nishikawa S."/>
            <person name="Nori F."/>
            <person name="Ohara O."/>
            <person name="Okazaki Y."/>
            <person name="Orlando V."/>
            <person name="Pang K.C."/>
            <person name="Pavan W.J."/>
            <person name="Pavesi G."/>
            <person name="Pesole G."/>
            <person name="Petrovsky N."/>
            <person name="Piazza S."/>
            <person name="Reed J."/>
            <person name="Reid J.F."/>
            <person name="Ring B.Z."/>
            <person name="Ringwald M."/>
            <person name="Rost B."/>
            <person name="Ruan Y."/>
            <person name="Salzberg S.L."/>
            <person name="Sandelin A."/>
            <person name="Schneider C."/>
            <person name="Schoenbach C."/>
            <person name="Sekiguchi K."/>
            <person name="Semple C.A."/>
            <person name="Seno S."/>
            <person name="Sessa L."/>
            <person name="Sheng Y."/>
            <person name="Shibata Y."/>
            <person name="Shimada H."/>
            <person name="Shimada K."/>
            <person name="Silva D."/>
            <person name="Sinclair B."/>
            <person name="Sperling S."/>
            <person name="Stupka E."/>
            <person name="Sugiura K."/>
            <person name="Sultana R."/>
            <person name="Takenaka Y."/>
            <person name="Taki K."/>
            <person name="Tammoja K."/>
            <person name="Tan S.L."/>
            <person name="Tang S."/>
            <person name="Taylor M.S."/>
            <person name="Tegner J."/>
            <person name="Teichmann S.A."/>
            <person name="Ueda H.R."/>
            <person name="van Nimwegen E."/>
            <person name="Verardo R."/>
            <person name="Wei C.L."/>
            <person name="Yagi K."/>
            <person name="Yamanishi H."/>
            <person name="Zabarovsky E."/>
            <person name="Zhu S."/>
            <person name="Zimmer A."/>
            <person name="Hide W."/>
            <person name="Bult C."/>
            <person name="Grimmond S.M."/>
            <person name="Teasdale R.D."/>
            <person name="Liu E.T."/>
            <person name="Brusic V."/>
            <person name="Quackenbush J."/>
            <person name="Wahlestedt C."/>
            <person name="Mattick J.S."/>
            <person name="Hume D.A."/>
            <person name="Kai C."/>
            <person name="Sasaki D."/>
            <person name="Tomaru Y."/>
            <person name="Fukuda S."/>
            <person name="Kanamori-Katayama M."/>
            <person name="Suzuki M."/>
            <person name="Aoki J."/>
            <person name="Arakawa T."/>
            <person name="Iida J."/>
            <person name="Imamura K."/>
            <person name="Itoh M."/>
            <person name="Kato T."/>
            <person name="Kawaji H."/>
            <person name="Kawagashira N."/>
            <person name="Kawashima T."/>
            <person name="Kojima M."/>
            <person name="Kondo S."/>
            <person name="Konno H."/>
            <person name="Nakano K."/>
            <person name="Ninomiya N."/>
            <person name="Nishio T."/>
            <person name="Okada M."/>
            <person name="Plessy C."/>
            <person name="Shibata K."/>
            <person name="Shiraki T."/>
            <person name="Suzuki S."/>
            <person name="Tagami M."/>
            <person name="Waki K."/>
            <person name="Watahiki A."/>
            <person name="Okamura-Oho Y."/>
            <person name="Suzuki H."/>
            <person name="Kawai J."/>
            <person name="Hayashizaki Y."/>
        </authorList>
    </citation>
    <scope>NUCLEOTIDE SEQUENCE [LARGE SCALE MRNA]</scope>
    <source>
        <strain>NOD</strain>
        <tissue>Spleen</tissue>
    </source>
</reference>
<reference key="3">
    <citation type="journal article" date="2004" name="Genome Res.">
        <title>The status, quality, and expansion of the NIH full-length cDNA project: the Mammalian Gene Collection (MGC).</title>
        <authorList>
            <consortium name="The MGC Project Team"/>
        </authorList>
    </citation>
    <scope>NUCLEOTIDE SEQUENCE [LARGE SCALE MRNA]</scope>
    <source>
        <strain>FVB/N</strain>
        <tissue>Mammary tumor</tissue>
    </source>
</reference>
<reference key="4">
    <citation type="journal article" date="1997" name="Mech. Dev.">
        <title>Expression patterns of the E2F family of transcription factors during mouse nervous system development.</title>
        <authorList>
            <person name="Dagnino L."/>
            <person name="Fry C.J."/>
            <person name="Bartley S.M."/>
            <person name="Farnham P."/>
            <person name="Gallie B.L."/>
            <person name="Phillips R.A."/>
        </authorList>
    </citation>
    <scope>DEVELOPMENTAL STAGE</scope>
</reference>
<reference key="5">
    <citation type="journal article" date="1997" name="Cell Growth Differ.">
        <title>Expression patterns of the E2F family of transcription factors during murine epithelial development.</title>
        <authorList>
            <person name="Dagnino L."/>
            <person name="Fry C.J."/>
            <person name="Bartley S.M."/>
            <person name="Farnham P."/>
            <person name="Gallie B.L."/>
            <person name="Phillips R.A."/>
        </authorList>
    </citation>
    <scope>DEVELOPMENTAL STAGE</scope>
</reference>
<comment type="function">
    <text evidence="2">Transcriptional activator that binds to E2F sites, these sites are present in the promoter of many genes whose products are involved in cell proliferation. May mediate growth factor-initiated signal transduction. It is likely involved in the early responses of resting cells to growth factor stimulation. Specifically required for multiciliate cell differentiation: together with MCIDAS and E2F5, binds and activate genes required for centriole biogenesis.</text>
</comment>
<comment type="subunit">
    <text evidence="1">Component of the DRTF1/E2F transcription factor complex. Binds cooperatively with DP-1 to E2F sites. Interaction with retinoblastoma protein RB1 or proteins RBL1 and RBL2 inhibits the E2F transactivation domain. Component of the DREAM complex (also named LINC complex) at least composed of E2F4, E2F5, LIN9, LIN37, LIN52, LIN54, MYBL1, MYBL2, RBL1, RBL2, RBBP4, TFDP1 and TFDP2. The complex exists in quiescent cells where it represses cell cycle-dependent genes. It dissociates in S phase when LIN9, LIN37, LIN52 and LIN54 form a subcomplex that binds to MYBL2 (By similarity).</text>
</comment>
<comment type="interaction">
    <interactant intactId="EBI-7225685">
        <id>Q61502</id>
    </interactant>
    <interactant intactId="EBI-8077763">
        <id>Q64163-4</id>
        <label>Tfdp2</label>
    </interactant>
    <organismsDiffer>false</organismsDiffer>
    <experiments>2</experiments>
</comment>
<comment type="subcellular location">
    <subcellularLocation>
        <location>Nucleus</location>
    </subcellularLocation>
</comment>
<comment type="developmental stage">
    <text evidence="5 6">In the developing epidermis, first detected in 13.5-14.5 dpc embryos. With the appearance of stratified epithelium, levels of E2F5 expression increase and by 16.5 dpc, high expression found in the suprabasal cell layers. High expression also found in other regions with stratified squamous epithelia including the developing palate, lip and tongue. In the developing nervous system, first detected in the forebrain at 9.5 dpc. At 10.5 dpc, strongly expressed in the rostral region of the spinal cord. By 11.5 dpc, E2F5 is expressed throughout the developing central nervous system. In 12.5-15.5 dpc embryos, expression found in the undifferentiated ventricular regions of the brain. In the retina, expressed, in 14.5-18.5 dpc embryos, in the retinoblastic cell layer. In other developing tissues, highly expressed in the choroid plexus. Also found in the kidney, liver, lung, heart and weakly, in developing skeletal muscle and chondrocytes.</text>
</comment>
<comment type="similarity">
    <text evidence="7">Belongs to the E2F/DP family.</text>
</comment>
<dbReference type="EMBL" id="X86925">
    <property type="protein sequence ID" value="CAA60508.1"/>
    <property type="molecule type" value="mRNA"/>
</dbReference>
<dbReference type="EMBL" id="AK156760">
    <property type="protein sequence ID" value="BAE33842.1"/>
    <property type="molecule type" value="mRNA"/>
</dbReference>
<dbReference type="EMBL" id="BC003220">
    <property type="protein sequence ID" value="AAH03220.1"/>
    <property type="molecule type" value="mRNA"/>
</dbReference>
<dbReference type="CCDS" id="CCDS38391.1"/>
<dbReference type="PIR" id="I48338">
    <property type="entry name" value="I48338"/>
</dbReference>
<dbReference type="RefSeq" id="NP_031918.2">
    <property type="nucleotide sequence ID" value="NM_007892.2"/>
</dbReference>
<dbReference type="SMR" id="Q61502"/>
<dbReference type="BioGRID" id="199352">
    <property type="interactions" value="4"/>
</dbReference>
<dbReference type="CORUM" id="Q61502"/>
<dbReference type="FunCoup" id="Q61502">
    <property type="interactions" value="3980"/>
</dbReference>
<dbReference type="IntAct" id="Q61502">
    <property type="interactions" value="3"/>
</dbReference>
<dbReference type="MINT" id="Q61502"/>
<dbReference type="STRING" id="10090.ENSMUSP00000029069"/>
<dbReference type="GlyGen" id="Q61502">
    <property type="glycosylation" value="1 site"/>
</dbReference>
<dbReference type="iPTMnet" id="Q61502"/>
<dbReference type="PhosphoSitePlus" id="Q61502"/>
<dbReference type="PaxDb" id="10090-ENSMUSP00000127877"/>
<dbReference type="PeptideAtlas" id="Q61502"/>
<dbReference type="ProteomicsDB" id="277433"/>
<dbReference type="Antibodypedia" id="6582">
    <property type="antibodies" value="217 antibodies from 30 providers"/>
</dbReference>
<dbReference type="DNASU" id="13559"/>
<dbReference type="Ensembl" id="ENSMUST00000029069.13">
    <property type="protein sequence ID" value="ENSMUSP00000029069.7"/>
    <property type="gene ID" value="ENSMUSG00000027552.16"/>
</dbReference>
<dbReference type="GeneID" id="13559"/>
<dbReference type="KEGG" id="mmu:13559"/>
<dbReference type="UCSC" id="uc008oqk.1">
    <property type="organism name" value="mouse"/>
</dbReference>
<dbReference type="AGR" id="MGI:105091"/>
<dbReference type="CTD" id="1875"/>
<dbReference type="MGI" id="MGI:105091">
    <property type="gene designation" value="E2f5"/>
</dbReference>
<dbReference type="VEuPathDB" id="HostDB:ENSMUSG00000027552"/>
<dbReference type="eggNOG" id="KOG2577">
    <property type="taxonomic scope" value="Eukaryota"/>
</dbReference>
<dbReference type="GeneTree" id="ENSGT00940000157353"/>
<dbReference type="HOGENOM" id="CLU_032091_2_0_1"/>
<dbReference type="InParanoid" id="Q61502"/>
<dbReference type="OrthoDB" id="85281at9989"/>
<dbReference type="Reactome" id="R-MMU-1538133">
    <property type="pathway name" value="G0 and Early G1"/>
</dbReference>
<dbReference type="Reactome" id="R-MMU-2173796">
    <property type="pathway name" value="SMAD2/SMAD3:SMAD4 heterotrimer regulates transcription"/>
</dbReference>
<dbReference type="Reactome" id="R-MMU-69231">
    <property type="pathway name" value="Cyclin D associated events in G1"/>
</dbReference>
<dbReference type="BioGRID-ORCS" id="13559">
    <property type="hits" value="2 hits in 78 CRISPR screens"/>
</dbReference>
<dbReference type="ChiTaRS" id="E2f5">
    <property type="organism name" value="mouse"/>
</dbReference>
<dbReference type="PRO" id="PR:Q61502"/>
<dbReference type="Proteomes" id="UP000000589">
    <property type="component" value="Chromosome 3"/>
</dbReference>
<dbReference type="RNAct" id="Q61502">
    <property type="molecule type" value="protein"/>
</dbReference>
<dbReference type="Bgee" id="ENSMUSG00000027552">
    <property type="expression patterns" value="Expressed in animal zygote and 257 other cell types or tissues"/>
</dbReference>
<dbReference type="ExpressionAtlas" id="Q61502">
    <property type="expression patterns" value="baseline and differential"/>
</dbReference>
<dbReference type="GO" id="GO:0005737">
    <property type="term" value="C:cytoplasm"/>
    <property type="evidence" value="ECO:0000314"/>
    <property type="project" value="MGI"/>
</dbReference>
<dbReference type="GO" id="GO:0001650">
    <property type="term" value="C:fibrillar center"/>
    <property type="evidence" value="ECO:0007669"/>
    <property type="project" value="Ensembl"/>
</dbReference>
<dbReference type="GO" id="GO:0005635">
    <property type="term" value="C:nuclear envelope"/>
    <property type="evidence" value="ECO:0000304"/>
    <property type="project" value="MGI"/>
</dbReference>
<dbReference type="GO" id="GO:0005654">
    <property type="term" value="C:nucleoplasm"/>
    <property type="evidence" value="ECO:0000304"/>
    <property type="project" value="Reactome"/>
</dbReference>
<dbReference type="GO" id="GO:0005634">
    <property type="term" value="C:nucleus"/>
    <property type="evidence" value="ECO:0000314"/>
    <property type="project" value="MGI"/>
</dbReference>
<dbReference type="GO" id="GO:0005667">
    <property type="term" value="C:transcription regulator complex"/>
    <property type="evidence" value="ECO:0007669"/>
    <property type="project" value="InterPro"/>
</dbReference>
<dbReference type="GO" id="GO:0001216">
    <property type="term" value="F:DNA-binding transcription activator activity"/>
    <property type="evidence" value="ECO:0007669"/>
    <property type="project" value="Ensembl"/>
</dbReference>
<dbReference type="GO" id="GO:0003700">
    <property type="term" value="F:DNA-binding transcription factor activity"/>
    <property type="evidence" value="ECO:0000314"/>
    <property type="project" value="MGI"/>
</dbReference>
<dbReference type="GO" id="GO:0046983">
    <property type="term" value="F:protein dimerization activity"/>
    <property type="evidence" value="ECO:0007669"/>
    <property type="project" value="InterPro"/>
</dbReference>
<dbReference type="GO" id="GO:0000978">
    <property type="term" value="F:RNA polymerase II cis-regulatory region sequence-specific DNA binding"/>
    <property type="evidence" value="ECO:0007669"/>
    <property type="project" value="InterPro"/>
</dbReference>
<dbReference type="GO" id="GO:0009887">
    <property type="term" value="P:animal organ morphogenesis"/>
    <property type="evidence" value="ECO:0000315"/>
    <property type="project" value="MGI"/>
</dbReference>
<dbReference type="GO" id="GO:0030030">
    <property type="term" value="P:cell projection organization"/>
    <property type="evidence" value="ECO:0007669"/>
    <property type="project" value="UniProtKB-KW"/>
</dbReference>
<dbReference type="GO" id="GO:0000082">
    <property type="term" value="P:G1/S transition of mitotic cell cycle"/>
    <property type="evidence" value="ECO:0000304"/>
    <property type="project" value="MGI"/>
</dbReference>
<dbReference type="GO" id="GO:0051726">
    <property type="term" value="P:regulation of cell cycle"/>
    <property type="evidence" value="ECO:0000304"/>
    <property type="project" value="MGI"/>
</dbReference>
<dbReference type="GO" id="GO:0006355">
    <property type="term" value="P:regulation of DNA-templated transcription"/>
    <property type="evidence" value="ECO:0000314"/>
    <property type="project" value="MGI"/>
</dbReference>
<dbReference type="GO" id="GO:0006357">
    <property type="term" value="P:regulation of transcription by RNA polymerase II"/>
    <property type="evidence" value="ECO:0007669"/>
    <property type="project" value="InterPro"/>
</dbReference>
<dbReference type="CDD" id="cd14660">
    <property type="entry name" value="E2F_DD"/>
    <property type="match status" value="1"/>
</dbReference>
<dbReference type="FunFam" id="1.10.10.10:FF:000008">
    <property type="entry name" value="E2F transcription factor 1"/>
    <property type="match status" value="1"/>
</dbReference>
<dbReference type="Gene3D" id="6.10.250.540">
    <property type="match status" value="1"/>
</dbReference>
<dbReference type="Gene3D" id="1.10.10.10">
    <property type="entry name" value="Winged helix-like DNA-binding domain superfamily/Winged helix DNA-binding domain"/>
    <property type="match status" value="1"/>
</dbReference>
<dbReference type="InterPro" id="IPR015633">
    <property type="entry name" value="E2F"/>
</dbReference>
<dbReference type="InterPro" id="IPR037241">
    <property type="entry name" value="E2F-DP_heterodim"/>
</dbReference>
<dbReference type="InterPro" id="IPR032198">
    <property type="entry name" value="E2F_CC-MB"/>
</dbReference>
<dbReference type="InterPro" id="IPR003316">
    <property type="entry name" value="E2F_WHTH_DNA-bd_dom"/>
</dbReference>
<dbReference type="InterPro" id="IPR036388">
    <property type="entry name" value="WH-like_DNA-bd_sf"/>
</dbReference>
<dbReference type="InterPro" id="IPR036390">
    <property type="entry name" value="WH_DNA-bd_sf"/>
</dbReference>
<dbReference type="PANTHER" id="PTHR12081">
    <property type="entry name" value="TRANSCRIPTION FACTOR E2F"/>
    <property type="match status" value="1"/>
</dbReference>
<dbReference type="PANTHER" id="PTHR12081:SF35">
    <property type="entry name" value="TRANSCRIPTION FACTOR E2F5"/>
    <property type="match status" value="1"/>
</dbReference>
<dbReference type="Pfam" id="PF16421">
    <property type="entry name" value="E2F_CC-MB"/>
    <property type="match status" value="1"/>
</dbReference>
<dbReference type="Pfam" id="PF02319">
    <property type="entry name" value="E2F_TDP"/>
    <property type="match status" value="1"/>
</dbReference>
<dbReference type="SMART" id="SM01372">
    <property type="entry name" value="E2F_TDP"/>
    <property type="match status" value="1"/>
</dbReference>
<dbReference type="SUPFAM" id="SSF144074">
    <property type="entry name" value="E2F-DP heterodimerization region"/>
    <property type="match status" value="1"/>
</dbReference>
<dbReference type="SUPFAM" id="SSF46785">
    <property type="entry name" value="Winged helix' DNA-binding domain"/>
    <property type="match status" value="1"/>
</dbReference>
<protein>
    <recommendedName>
        <fullName>Transcription factor E2F5</fullName>
        <shortName>E2F-5</shortName>
    </recommendedName>
</protein>
<accession>Q61502</accession>
<accession>Q99LK0</accession>
<name>E2F5_MOUSE</name>
<gene>
    <name type="primary">E2f5</name>
</gene>